<proteinExistence type="inferred from homology"/>
<reference key="1">
    <citation type="journal article" date="2007" name="Proc. Natl. Acad. Sci. U.S.A.">
        <title>Deep-sea vent epsilon-proteobacterial genomes provide insights into emergence of pathogens.</title>
        <authorList>
            <person name="Nakagawa S."/>
            <person name="Takaki Y."/>
            <person name="Shimamura S."/>
            <person name="Reysenbach A.-L."/>
            <person name="Takai K."/>
            <person name="Horikoshi K."/>
        </authorList>
    </citation>
    <scope>NUCLEOTIDE SEQUENCE [LARGE SCALE GENOMIC DNA]</scope>
    <source>
        <strain>NBC37-1</strain>
    </source>
</reference>
<comment type="function">
    <text evidence="1">This is one of the proteins that bind and probably mediate the attachment of the 5S RNA into the large ribosomal subunit, where it forms part of the central protuberance. In the 70S ribosome it contacts protein S13 of the 30S subunit (bridge B1b), connecting the 2 subunits; this bridge is implicated in subunit movement. Contacts the P site tRNA; the 5S rRNA and some of its associated proteins might help stabilize positioning of ribosome-bound tRNAs.</text>
</comment>
<comment type="subunit">
    <text evidence="1">Part of the 50S ribosomal subunit; part of the 5S rRNA/L5/L18/L25 subcomplex. Contacts the 5S rRNA and the P site tRNA. Forms a bridge to the 30S subunit in the 70S ribosome.</text>
</comment>
<comment type="similarity">
    <text evidence="1">Belongs to the universal ribosomal protein uL5 family.</text>
</comment>
<dbReference type="EMBL" id="AP009179">
    <property type="protein sequence ID" value="BAF73269.1"/>
    <property type="molecule type" value="Genomic_DNA"/>
</dbReference>
<dbReference type="RefSeq" id="WP_012084110.1">
    <property type="nucleotide sequence ID" value="NC_009663.1"/>
</dbReference>
<dbReference type="SMR" id="A6QCR0"/>
<dbReference type="STRING" id="387093.SUN_2333"/>
<dbReference type="KEGG" id="sun:SUN_2333"/>
<dbReference type="eggNOG" id="COG0094">
    <property type="taxonomic scope" value="Bacteria"/>
</dbReference>
<dbReference type="HOGENOM" id="CLU_061015_2_1_7"/>
<dbReference type="OrthoDB" id="9806626at2"/>
<dbReference type="Proteomes" id="UP000006378">
    <property type="component" value="Chromosome"/>
</dbReference>
<dbReference type="GO" id="GO:1990904">
    <property type="term" value="C:ribonucleoprotein complex"/>
    <property type="evidence" value="ECO:0007669"/>
    <property type="project" value="UniProtKB-KW"/>
</dbReference>
<dbReference type="GO" id="GO:0005840">
    <property type="term" value="C:ribosome"/>
    <property type="evidence" value="ECO:0007669"/>
    <property type="project" value="UniProtKB-KW"/>
</dbReference>
<dbReference type="GO" id="GO:0019843">
    <property type="term" value="F:rRNA binding"/>
    <property type="evidence" value="ECO:0007669"/>
    <property type="project" value="UniProtKB-UniRule"/>
</dbReference>
<dbReference type="GO" id="GO:0003735">
    <property type="term" value="F:structural constituent of ribosome"/>
    <property type="evidence" value="ECO:0007669"/>
    <property type="project" value="InterPro"/>
</dbReference>
<dbReference type="GO" id="GO:0000049">
    <property type="term" value="F:tRNA binding"/>
    <property type="evidence" value="ECO:0007669"/>
    <property type="project" value="UniProtKB-UniRule"/>
</dbReference>
<dbReference type="GO" id="GO:0006412">
    <property type="term" value="P:translation"/>
    <property type="evidence" value="ECO:0007669"/>
    <property type="project" value="UniProtKB-UniRule"/>
</dbReference>
<dbReference type="FunFam" id="3.30.1440.10:FF:000001">
    <property type="entry name" value="50S ribosomal protein L5"/>
    <property type="match status" value="1"/>
</dbReference>
<dbReference type="Gene3D" id="3.30.1440.10">
    <property type="match status" value="1"/>
</dbReference>
<dbReference type="HAMAP" id="MF_01333_B">
    <property type="entry name" value="Ribosomal_uL5_B"/>
    <property type="match status" value="1"/>
</dbReference>
<dbReference type="InterPro" id="IPR002132">
    <property type="entry name" value="Ribosomal_uL5"/>
</dbReference>
<dbReference type="InterPro" id="IPR020930">
    <property type="entry name" value="Ribosomal_uL5_bac-type"/>
</dbReference>
<dbReference type="InterPro" id="IPR031309">
    <property type="entry name" value="Ribosomal_uL5_C"/>
</dbReference>
<dbReference type="InterPro" id="IPR022803">
    <property type="entry name" value="Ribosomal_uL5_dom_sf"/>
</dbReference>
<dbReference type="InterPro" id="IPR031310">
    <property type="entry name" value="Ribosomal_uL5_N"/>
</dbReference>
<dbReference type="NCBIfam" id="NF000585">
    <property type="entry name" value="PRK00010.1"/>
    <property type="match status" value="1"/>
</dbReference>
<dbReference type="PANTHER" id="PTHR11994">
    <property type="entry name" value="60S RIBOSOMAL PROTEIN L11-RELATED"/>
    <property type="match status" value="1"/>
</dbReference>
<dbReference type="Pfam" id="PF00281">
    <property type="entry name" value="Ribosomal_L5"/>
    <property type="match status" value="1"/>
</dbReference>
<dbReference type="Pfam" id="PF00673">
    <property type="entry name" value="Ribosomal_L5_C"/>
    <property type="match status" value="1"/>
</dbReference>
<dbReference type="PIRSF" id="PIRSF002161">
    <property type="entry name" value="Ribosomal_L5"/>
    <property type="match status" value="1"/>
</dbReference>
<dbReference type="SUPFAM" id="SSF55282">
    <property type="entry name" value="RL5-like"/>
    <property type="match status" value="1"/>
</dbReference>
<gene>
    <name evidence="1" type="primary">rplE</name>
    <name type="ordered locus">SUN_2333</name>
</gene>
<name>RL5_SULNB</name>
<keyword id="KW-0687">Ribonucleoprotein</keyword>
<keyword id="KW-0689">Ribosomal protein</keyword>
<keyword id="KW-0694">RNA-binding</keyword>
<keyword id="KW-0699">rRNA-binding</keyword>
<keyword id="KW-0820">tRNA-binding</keyword>
<accession>A6QCR0</accession>
<organism>
    <name type="scientific">Sulfurovum sp. (strain NBC37-1)</name>
    <dbReference type="NCBI Taxonomy" id="387093"/>
    <lineage>
        <taxon>Bacteria</taxon>
        <taxon>Pseudomonadati</taxon>
        <taxon>Campylobacterota</taxon>
        <taxon>Epsilonproteobacteria</taxon>
        <taxon>Campylobacterales</taxon>
        <taxon>Sulfurovaceae</taxon>
        <taxon>Sulfurovum</taxon>
    </lineage>
</organism>
<feature type="chain" id="PRO_1000142462" description="Large ribosomal subunit protein uL5">
    <location>
        <begin position="1"/>
        <end position="181"/>
    </location>
</feature>
<protein>
    <recommendedName>
        <fullName evidence="1">Large ribosomal subunit protein uL5</fullName>
    </recommendedName>
    <alternativeName>
        <fullName evidence="2">50S ribosomal protein L5</fullName>
    </alternativeName>
</protein>
<evidence type="ECO:0000255" key="1">
    <source>
        <dbReference type="HAMAP-Rule" id="MF_01333"/>
    </source>
</evidence>
<evidence type="ECO:0000305" key="2"/>
<sequence length="181" mass="20061">MSRMKQKYNDIVPALREECGVQNTMQTPKLEKIVISVGAGEEGRDSKLIANMADTISLIAGQKAVIVNAKKSVAGFKAREGAPSGIRVTLRGDNMYNFFDKLVSIALPRVKDFRGTPRKGFDGRGNYNFGLQEQLMFPEVEFDNIIKTHGMNITIVTSTEDDKQAFTLLEKLGMPFAKGRN</sequence>